<name>METE_HAEIN</name>
<proteinExistence type="inferred from homology"/>
<protein>
    <recommendedName>
        <fullName evidence="1">5-methyltetrahydropteroyltriglutamate--homocysteine methyltransferase</fullName>
        <ecNumber evidence="1">2.1.1.14</ecNumber>
    </recommendedName>
    <alternativeName>
        <fullName evidence="1">Cobalamin-independent methionine synthase</fullName>
    </alternativeName>
    <alternativeName>
        <fullName evidence="1">Methionine synthase, vitamin-B12 independent isozyme</fullName>
    </alternativeName>
</protein>
<comment type="function">
    <text evidence="1">Catalyzes the transfer of a methyl group from 5-methyltetrahydrofolate to homocysteine resulting in methionine formation.</text>
</comment>
<comment type="catalytic activity">
    <reaction evidence="1">
        <text>5-methyltetrahydropteroyltri-L-glutamate + L-homocysteine = tetrahydropteroyltri-L-glutamate + L-methionine</text>
        <dbReference type="Rhea" id="RHEA:21196"/>
        <dbReference type="ChEBI" id="CHEBI:57844"/>
        <dbReference type="ChEBI" id="CHEBI:58140"/>
        <dbReference type="ChEBI" id="CHEBI:58199"/>
        <dbReference type="ChEBI" id="CHEBI:58207"/>
        <dbReference type="EC" id="2.1.1.14"/>
    </reaction>
</comment>
<comment type="cofactor">
    <cofactor evidence="1">
        <name>Zn(2+)</name>
        <dbReference type="ChEBI" id="CHEBI:29105"/>
    </cofactor>
    <text evidence="1">Binds 1 zinc ion per subunit.</text>
</comment>
<comment type="pathway">
    <text evidence="1">Amino-acid biosynthesis; L-methionine biosynthesis via de novo pathway; L-methionine from L-homocysteine (MetE route): step 1/1.</text>
</comment>
<comment type="similarity">
    <text evidence="1 2">Belongs to the vitamin-B12 independent methionine synthase family.</text>
</comment>
<keyword id="KW-0028">Amino-acid biosynthesis</keyword>
<keyword id="KW-0479">Metal-binding</keyword>
<keyword id="KW-0486">Methionine biosynthesis</keyword>
<keyword id="KW-0489">Methyltransferase</keyword>
<keyword id="KW-1185">Reference proteome</keyword>
<keyword id="KW-0677">Repeat</keyword>
<keyword id="KW-0808">Transferase</keyword>
<keyword id="KW-0862">Zinc</keyword>
<reference key="1">
    <citation type="journal article" date="1995" name="Science">
        <title>Whole-genome random sequencing and assembly of Haemophilus influenzae Rd.</title>
        <authorList>
            <person name="Fleischmann R.D."/>
            <person name="Adams M.D."/>
            <person name="White O."/>
            <person name="Clayton R.A."/>
            <person name="Kirkness E.F."/>
            <person name="Kerlavage A.R."/>
            <person name="Bult C.J."/>
            <person name="Tomb J.-F."/>
            <person name="Dougherty B.A."/>
            <person name="Merrick J.M."/>
            <person name="McKenney K."/>
            <person name="Sutton G.G."/>
            <person name="FitzHugh W."/>
            <person name="Fields C.A."/>
            <person name="Gocayne J.D."/>
            <person name="Scott J.D."/>
            <person name="Shirley R."/>
            <person name="Liu L.-I."/>
            <person name="Glodek A."/>
            <person name="Kelley J.M."/>
            <person name="Weidman J.F."/>
            <person name="Phillips C.A."/>
            <person name="Spriggs T."/>
            <person name="Hedblom E."/>
            <person name="Cotton M.D."/>
            <person name="Utterback T.R."/>
            <person name="Hanna M.C."/>
            <person name="Nguyen D.T."/>
            <person name="Saudek D.M."/>
            <person name="Brandon R.C."/>
            <person name="Fine L.D."/>
            <person name="Fritchman J.L."/>
            <person name="Fuhrmann J.L."/>
            <person name="Geoghagen N.S.M."/>
            <person name="Gnehm C.L."/>
            <person name="McDonald L.A."/>
            <person name="Small K.V."/>
            <person name="Fraser C.M."/>
            <person name="Smith H.O."/>
            <person name="Venter J.C."/>
        </authorList>
    </citation>
    <scope>NUCLEOTIDE SEQUENCE [LARGE SCALE GENOMIC DNA]</scope>
    <source>
        <strain>ATCC 51907 / DSM 11121 / KW20 / Rd</strain>
    </source>
</reference>
<feature type="chain" id="PRO_0000098633" description="5-methyltetrahydropteroyltriglutamate--homocysteine methyltransferase">
    <location>
        <begin position="1"/>
        <end position="756"/>
    </location>
</feature>
<feature type="active site" description="Proton donor" evidence="1">
    <location>
        <position position="695"/>
    </location>
</feature>
<feature type="binding site" evidence="1">
    <location>
        <begin position="16"/>
        <end position="19"/>
    </location>
    <ligand>
        <name>5-methyltetrahydropteroyltri-L-glutamate</name>
        <dbReference type="ChEBI" id="CHEBI:58207"/>
    </ligand>
</feature>
<feature type="binding site" evidence="1">
    <location>
        <position position="112"/>
    </location>
    <ligand>
        <name>5-methyltetrahydropteroyltri-L-glutamate</name>
        <dbReference type="ChEBI" id="CHEBI:58207"/>
    </ligand>
</feature>
<feature type="binding site" evidence="1">
    <location>
        <begin position="432"/>
        <end position="434"/>
    </location>
    <ligand>
        <name>L-homocysteine</name>
        <dbReference type="ChEBI" id="CHEBI:58199"/>
    </ligand>
</feature>
<feature type="binding site" evidence="1">
    <location>
        <begin position="432"/>
        <end position="434"/>
    </location>
    <ligand>
        <name>L-methionine</name>
        <dbReference type="ChEBI" id="CHEBI:57844"/>
    </ligand>
</feature>
<feature type="binding site" evidence="1">
    <location>
        <position position="485"/>
    </location>
    <ligand>
        <name>L-homocysteine</name>
        <dbReference type="ChEBI" id="CHEBI:58199"/>
    </ligand>
</feature>
<feature type="binding site" evidence="1">
    <location>
        <position position="485"/>
    </location>
    <ligand>
        <name>L-methionine</name>
        <dbReference type="ChEBI" id="CHEBI:57844"/>
    </ligand>
</feature>
<feature type="binding site" evidence="1">
    <location>
        <begin position="516"/>
        <end position="517"/>
    </location>
    <ligand>
        <name>5-methyltetrahydropteroyltri-L-glutamate</name>
        <dbReference type="ChEBI" id="CHEBI:58207"/>
    </ligand>
</feature>
<feature type="binding site" evidence="1">
    <location>
        <position position="562"/>
    </location>
    <ligand>
        <name>5-methyltetrahydropteroyltri-L-glutamate</name>
        <dbReference type="ChEBI" id="CHEBI:58207"/>
    </ligand>
</feature>
<feature type="binding site" evidence="1">
    <location>
        <position position="600"/>
    </location>
    <ligand>
        <name>L-homocysteine</name>
        <dbReference type="ChEBI" id="CHEBI:58199"/>
    </ligand>
</feature>
<feature type="binding site" evidence="1">
    <location>
        <position position="600"/>
    </location>
    <ligand>
        <name>L-methionine</name>
        <dbReference type="ChEBI" id="CHEBI:57844"/>
    </ligand>
</feature>
<feature type="binding site" evidence="1">
    <location>
        <position position="606"/>
    </location>
    <ligand>
        <name>5-methyltetrahydropteroyltri-L-glutamate</name>
        <dbReference type="ChEBI" id="CHEBI:58207"/>
    </ligand>
</feature>
<feature type="binding site" evidence="1">
    <location>
        <position position="642"/>
    </location>
    <ligand>
        <name>Zn(2+)</name>
        <dbReference type="ChEBI" id="CHEBI:29105"/>
        <note>catalytic</note>
    </ligand>
</feature>
<feature type="binding site" evidence="1">
    <location>
        <position position="644"/>
    </location>
    <ligand>
        <name>Zn(2+)</name>
        <dbReference type="ChEBI" id="CHEBI:29105"/>
        <note>catalytic</note>
    </ligand>
</feature>
<feature type="binding site" evidence="1">
    <location>
        <position position="666"/>
    </location>
    <ligand>
        <name>Zn(2+)</name>
        <dbReference type="ChEBI" id="CHEBI:29105"/>
        <note>catalytic</note>
    </ligand>
</feature>
<feature type="binding site" evidence="1">
    <location>
        <position position="727"/>
    </location>
    <ligand>
        <name>Zn(2+)</name>
        <dbReference type="ChEBI" id="CHEBI:29105"/>
        <note>catalytic</note>
    </ligand>
</feature>
<sequence>MTTSHILGFPRVGAKRELKFAQERYWRKELAEQDLLDLAKALREKNWKHQAAANADFVAVGDFTFYDHILDLQVATGAIPARFGFDSQNLTLDQYFQLARGNKDQFAIEMTKWFDTNYHYLVPEFQKSTAFKANPAHYVNQIREAKALGLNFKPVIVGPLTFLWLGKEKGEAFNRFDLLNQLVPVYVEILNALVAEGAEWIQIDEPALALDLPAEWVEAYKSVYTELSKVNAKLLLATYFGSVAEHAELLKALPVAGLHLDLVRAPEQLAAFEDYSKVLSAGVIEGRNIWRANLNKVLDVLEPLKAKLGERLWIAPSCSLLHTPFDLEVEVQLKEKNTALYSWLSFTLQKVEELNVLKQALNNGRASVQAALDASQVAADARATSKEIHRPEVAERLANLPKGADQRKSPFAERIVKQNAWLNLPLLPTTNIGSFPQTTEIRHARASFKKGELSLADYEAAMKKEIEYVVRRQEELDLDVLVHGEAERNDMVEYFGELLDGFAFTKFGWVQSYGSRCVKPPVIYGDVTRPEPMTVRWSQYAQSLTNRVMKGMLTGPVTILQWSFVRNDIPRSTVCKQIGVALSDEVLDLEAAGIKVIQIDEPAIREGLPLKRADWDAYLQWAGEAFRLSSMGVQDDTQIHTHMCYSEFNDILPAIAALDADVITIETSRSDMELLTAFADFKYPNDIGPGVYDIHSPRVPTATEVEHLLRKALNVIPKERLWVNPDCGLKTRGWTETIDQLKVMVDVTKKLRAELA</sequence>
<organism>
    <name type="scientific">Haemophilus influenzae (strain ATCC 51907 / DSM 11121 / KW20 / Rd)</name>
    <dbReference type="NCBI Taxonomy" id="71421"/>
    <lineage>
        <taxon>Bacteria</taxon>
        <taxon>Pseudomonadati</taxon>
        <taxon>Pseudomonadota</taxon>
        <taxon>Gammaproteobacteria</taxon>
        <taxon>Pasteurellales</taxon>
        <taxon>Pasteurellaceae</taxon>
        <taxon>Haemophilus</taxon>
    </lineage>
</organism>
<dbReference type="EC" id="2.1.1.14" evidence="1"/>
<dbReference type="EMBL" id="L42023">
    <property type="protein sequence ID" value="AAC23348.1"/>
    <property type="molecule type" value="Genomic_DNA"/>
</dbReference>
<dbReference type="PIR" id="B64137">
    <property type="entry name" value="B64137"/>
</dbReference>
<dbReference type="RefSeq" id="NP_439844.1">
    <property type="nucleotide sequence ID" value="NC_000907.1"/>
</dbReference>
<dbReference type="SMR" id="P45331"/>
<dbReference type="STRING" id="71421.HI_1702"/>
<dbReference type="DNASU" id="949942"/>
<dbReference type="EnsemblBacteria" id="AAC23348">
    <property type="protein sequence ID" value="AAC23348"/>
    <property type="gene ID" value="HI_1702"/>
</dbReference>
<dbReference type="KEGG" id="hin:HI_1702"/>
<dbReference type="PATRIC" id="fig|71421.8.peg.1781"/>
<dbReference type="eggNOG" id="COG0620">
    <property type="taxonomic scope" value="Bacteria"/>
</dbReference>
<dbReference type="HOGENOM" id="CLU_013175_0_0_6"/>
<dbReference type="OrthoDB" id="244285at2"/>
<dbReference type="PhylomeDB" id="P45331"/>
<dbReference type="BioCyc" id="HINF71421:G1GJ1-1718-MONOMER"/>
<dbReference type="UniPathway" id="UPA00051">
    <property type="reaction ID" value="UER00082"/>
</dbReference>
<dbReference type="Proteomes" id="UP000000579">
    <property type="component" value="Chromosome"/>
</dbReference>
<dbReference type="GO" id="GO:0003871">
    <property type="term" value="F:5-methyltetrahydropteroyltriglutamate-homocysteine S-methyltransferase activity"/>
    <property type="evidence" value="ECO:0007669"/>
    <property type="project" value="UniProtKB-UniRule"/>
</dbReference>
<dbReference type="GO" id="GO:0008270">
    <property type="term" value="F:zinc ion binding"/>
    <property type="evidence" value="ECO:0007669"/>
    <property type="project" value="InterPro"/>
</dbReference>
<dbReference type="GO" id="GO:0009086">
    <property type="term" value="P:methionine biosynthetic process"/>
    <property type="evidence" value="ECO:0007669"/>
    <property type="project" value="UniProtKB-UniRule"/>
</dbReference>
<dbReference type="GO" id="GO:0032259">
    <property type="term" value="P:methylation"/>
    <property type="evidence" value="ECO:0007669"/>
    <property type="project" value="UniProtKB-KW"/>
</dbReference>
<dbReference type="CDD" id="cd03311">
    <property type="entry name" value="CIMS_C_terminal_like"/>
    <property type="match status" value="1"/>
</dbReference>
<dbReference type="CDD" id="cd03312">
    <property type="entry name" value="CIMS_N_terminal_like"/>
    <property type="match status" value="1"/>
</dbReference>
<dbReference type="FunFam" id="3.20.20.210:FF:000002">
    <property type="entry name" value="5-methyltetrahydropteroyltriglutamate--homocysteine methyltransferase"/>
    <property type="match status" value="1"/>
</dbReference>
<dbReference type="Gene3D" id="3.20.20.210">
    <property type="match status" value="2"/>
</dbReference>
<dbReference type="HAMAP" id="MF_00172">
    <property type="entry name" value="Meth_synth"/>
    <property type="match status" value="1"/>
</dbReference>
<dbReference type="InterPro" id="IPR013215">
    <property type="entry name" value="Cbl-indep_Met_Synth_N"/>
</dbReference>
<dbReference type="InterPro" id="IPR006276">
    <property type="entry name" value="Cobalamin-indep_Met_synthase"/>
</dbReference>
<dbReference type="InterPro" id="IPR002629">
    <property type="entry name" value="Met_Synth_C/arc"/>
</dbReference>
<dbReference type="InterPro" id="IPR038071">
    <property type="entry name" value="UROD/MetE-like_sf"/>
</dbReference>
<dbReference type="NCBIfam" id="TIGR01371">
    <property type="entry name" value="met_syn_B12ind"/>
    <property type="match status" value="1"/>
</dbReference>
<dbReference type="NCBIfam" id="NF003556">
    <property type="entry name" value="PRK05222.1"/>
    <property type="match status" value="1"/>
</dbReference>
<dbReference type="PANTHER" id="PTHR30519">
    <property type="entry name" value="5-METHYLTETRAHYDROPTEROYLTRIGLUTAMATE--HOMOCYSTEINE METHYLTRANSFERASE"/>
    <property type="match status" value="1"/>
</dbReference>
<dbReference type="Pfam" id="PF08267">
    <property type="entry name" value="Meth_synt_1"/>
    <property type="match status" value="1"/>
</dbReference>
<dbReference type="Pfam" id="PF01717">
    <property type="entry name" value="Meth_synt_2"/>
    <property type="match status" value="1"/>
</dbReference>
<dbReference type="PIRSF" id="PIRSF000382">
    <property type="entry name" value="MeTrfase_B12_ind"/>
    <property type="match status" value="1"/>
</dbReference>
<dbReference type="SUPFAM" id="SSF51726">
    <property type="entry name" value="UROD/MetE-like"/>
    <property type="match status" value="2"/>
</dbReference>
<evidence type="ECO:0000255" key="1">
    <source>
        <dbReference type="HAMAP-Rule" id="MF_00172"/>
    </source>
</evidence>
<evidence type="ECO:0000305" key="2"/>
<accession>P45331</accession>
<gene>
    <name evidence="1" type="primary">metE</name>
    <name type="ordered locus">HI_1702</name>
</gene>